<comment type="function">
    <text evidence="2">Binds to the platelet and collagen receptor glycoprotein VI (GP6) and activates platelet aggregation.</text>
</comment>
<comment type="subunit">
    <text>Heterodimer of subunits alpha and beta; disulfide-linked.</text>
</comment>
<comment type="subcellular location">
    <subcellularLocation>
        <location>Secreted</location>
    </subcellularLocation>
</comment>
<comment type="tissue specificity">
    <text>Expressed by the venom gland.</text>
</comment>
<comment type="miscellaneous">
    <text evidence="4">Negative results: does not agglutinate fixed platelets.</text>
</comment>
<comment type="similarity">
    <text evidence="3">Belongs to the snaclec family.</text>
</comment>
<feature type="chain" id="PRO_0000355283" description="Snaclec ophioluxin subunit alpha">
    <location>
        <begin position="1"/>
        <end position="20" status="greater than"/>
    </location>
</feature>
<feature type="domain" description="C-type lectin" evidence="1">
    <location>
        <begin position="11"/>
        <end position="20" status="greater than"/>
    </location>
</feature>
<feature type="disulfide bond" evidence="1">
    <location>
        <begin position="4"/>
        <end position="15"/>
    </location>
</feature>
<feature type="non-terminal residue">
    <location>
        <position position="20"/>
    </location>
</feature>
<dbReference type="GO" id="GO:0005576">
    <property type="term" value="C:extracellular region"/>
    <property type="evidence" value="ECO:0007669"/>
    <property type="project" value="UniProtKB-SubCell"/>
</dbReference>
<dbReference type="GO" id="GO:0090729">
    <property type="term" value="F:toxin activity"/>
    <property type="evidence" value="ECO:0007669"/>
    <property type="project" value="UniProtKB-KW"/>
</dbReference>
<proteinExistence type="evidence at protein level"/>
<organism>
    <name type="scientific">Ophiophagus hannah</name>
    <name type="common">King cobra</name>
    <name type="synonym">Naja hannah</name>
    <dbReference type="NCBI Taxonomy" id="8665"/>
    <lineage>
        <taxon>Eukaryota</taxon>
        <taxon>Metazoa</taxon>
        <taxon>Chordata</taxon>
        <taxon>Craniata</taxon>
        <taxon>Vertebrata</taxon>
        <taxon>Euteleostomi</taxon>
        <taxon>Lepidosauria</taxon>
        <taxon>Squamata</taxon>
        <taxon>Bifurcata</taxon>
        <taxon>Unidentata</taxon>
        <taxon>Episquamata</taxon>
        <taxon>Toxicofera</taxon>
        <taxon>Serpentes</taxon>
        <taxon>Colubroidea</taxon>
        <taxon>Elapidae</taxon>
        <taxon>Elapinae</taxon>
        <taxon>Ophiophagus</taxon>
    </lineage>
</organism>
<keyword id="KW-0903">Direct protein sequencing</keyword>
<keyword id="KW-1015">Disulfide bond</keyword>
<keyword id="KW-1199">Hemostasis impairing toxin</keyword>
<keyword id="KW-1202">Platelet aggregation activating toxin</keyword>
<keyword id="KW-0964">Secreted</keyword>
<keyword id="KW-0800">Toxin</keyword>
<accession>P0C8J0</accession>
<sequence>DFKCPSEWYAYDQHCYRIIN</sequence>
<protein>
    <recommendedName>
        <fullName>Snaclec ophioluxin subunit alpha</fullName>
    </recommendedName>
</protein>
<evidence type="ECO:0000255" key="1">
    <source>
        <dbReference type="PROSITE-ProRule" id="PRU00040"/>
    </source>
</evidence>
<evidence type="ECO:0000269" key="2">
    <source>
    </source>
</evidence>
<evidence type="ECO:0000305" key="3"/>
<evidence type="ECO:0000305" key="4">
    <source>
    </source>
</evidence>
<name>SLA_OPHHA</name>
<reference key="1">
    <citation type="journal article" date="2002" name="J. Biol. Chem.">
        <title>Ophioluxin, a convulxin-like C-type lectin from Ophiophagus hannah (King cobra) is a powerful platelet activator via glycoprotein VI.</title>
        <authorList>
            <person name="Du X.-Y."/>
            <person name="Clemetson J.M."/>
            <person name="Navdaev A."/>
            <person name="Magnenat E.M."/>
            <person name="Wells T.N.C."/>
            <person name="Clemetson K.J."/>
        </authorList>
    </citation>
    <scope>PROTEIN SEQUENCE</scope>
    <scope>FUNCTION</scope>
    <source>
        <tissue>Venom</tissue>
    </source>
</reference>